<dbReference type="EC" id="2.3.1.234" evidence="1"/>
<dbReference type="EMBL" id="CR954253">
    <property type="protein sequence ID" value="CAI98410.1"/>
    <property type="molecule type" value="Genomic_DNA"/>
</dbReference>
<dbReference type="RefSeq" id="WP_011544120.1">
    <property type="nucleotide sequence ID" value="NZ_JQAV01000002.1"/>
</dbReference>
<dbReference type="SMR" id="Q1G933"/>
<dbReference type="STRING" id="390333.Ldb1621"/>
<dbReference type="KEGG" id="ldb:Ldb1621"/>
<dbReference type="PATRIC" id="fig|390333.13.peg.1001"/>
<dbReference type="eggNOG" id="COG0533">
    <property type="taxonomic scope" value="Bacteria"/>
</dbReference>
<dbReference type="HOGENOM" id="CLU_023208_0_2_9"/>
<dbReference type="BioCyc" id="LDEL390333:LDB_RS07010-MONOMER"/>
<dbReference type="Proteomes" id="UP000001259">
    <property type="component" value="Chromosome"/>
</dbReference>
<dbReference type="GO" id="GO:0005737">
    <property type="term" value="C:cytoplasm"/>
    <property type="evidence" value="ECO:0007669"/>
    <property type="project" value="UniProtKB-SubCell"/>
</dbReference>
<dbReference type="GO" id="GO:0005506">
    <property type="term" value="F:iron ion binding"/>
    <property type="evidence" value="ECO:0007669"/>
    <property type="project" value="UniProtKB-UniRule"/>
</dbReference>
<dbReference type="GO" id="GO:0061711">
    <property type="term" value="F:N(6)-L-threonylcarbamoyladenine synthase activity"/>
    <property type="evidence" value="ECO:0007669"/>
    <property type="project" value="UniProtKB-EC"/>
</dbReference>
<dbReference type="GO" id="GO:0002949">
    <property type="term" value="P:tRNA threonylcarbamoyladenosine modification"/>
    <property type="evidence" value="ECO:0007669"/>
    <property type="project" value="UniProtKB-UniRule"/>
</dbReference>
<dbReference type="CDD" id="cd24133">
    <property type="entry name" value="ASKHA_NBD_TsaD_bac"/>
    <property type="match status" value="1"/>
</dbReference>
<dbReference type="FunFam" id="3.30.420.40:FF:000040">
    <property type="entry name" value="tRNA N6-adenosine threonylcarbamoyltransferase"/>
    <property type="match status" value="1"/>
</dbReference>
<dbReference type="Gene3D" id="3.30.420.40">
    <property type="match status" value="2"/>
</dbReference>
<dbReference type="HAMAP" id="MF_01445">
    <property type="entry name" value="TsaD"/>
    <property type="match status" value="1"/>
</dbReference>
<dbReference type="InterPro" id="IPR043129">
    <property type="entry name" value="ATPase_NBD"/>
</dbReference>
<dbReference type="InterPro" id="IPR000905">
    <property type="entry name" value="Gcp-like_dom"/>
</dbReference>
<dbReference type="InterPro" id="IPR017861">
    <property type="entry name" value="KAE1/TsaD"/>
</dbReference>
<dbReference type="InterPro" id="IPR022450">
    <property type="entry name" value="TsaD"/>
</dbReference>
<dbReference type="NCBIfam" id="TIGR00329">
    <property type="entry name" value="gcp_kae1"/>
    <property type="match status" value="1"/>
</dbReference>
<dbReference type="NCBIfam" id="TIGR03723">
    <property type="entry name" value="T6A_TsaD_YgjD"/>
    <property type="match status" value="1"/>
</dbReference>
<dbReference type="PANTHER" id="PTHR11735">
    <property type="entry name" value="TRNA N6-ADENOSINE THREONYLCARBAMOYLTRANSFERASE"/>
    <property type="match status" value="1"/>
</dbReference>
<dbReference type="PANTHER" id="PTHR11735:SF6">
    <property type="entry name" value="TRNA N6-ADENOSINE THREONYLCARBAMOYLTRANSFERASE, MITOCHONDRIAL"/>
    <property type="match status" value="1"/>
</dbReference>
<dbReference type="Pfam" id="PF00814">
    <property type="entry name" value="TsaD"/>
    <property type="match status" value="1"/>
</dbReference>
<dbReference type="PRINTS" id="PR00789">
    <property type="entry name" value="OSIALOPTASE"/>
</dbReference>
<dbReference type="SUPFAM" id="SSF53067">
    <property type="entry name" value="Actin-like ATPase domain"/>
    <property type="match status" value="2"/>
</dbReference>
<keyword id="KW-0012">Acyltransferase</keyword>
<keyword id="KW-0963">Cytoplasm</keyword>
<keyword id="KW-0408">Iron</keyword>
<keyword id="KW-0479">Metal-binding</keyword>
<keyword id="KW-1185">Reference proteome</keyword>
<keyword id="KW-0808">Transferase</keyword>
<keyword id="KW-0819">tRNA processing</keyword>
<protein>
    <recommendedName>
        <fullName evidence="1">tRNA N6-adenosine threonylcarbamoyltransferase</fullName>
        <ecNumber evidence="1">2.3.1.234</ecNumber>
    </recommendedName>
    <alternativeName>
        <fullName evidence="1">N6-L-threonylcarbamoyladenine synthase</fullName>
        <shortName evidence="1">t(6)A synthase</shortName>
    </alternativeName>
    <alternativeName>
        <fullName evidence="1">t(6)A37 threonylcarbamoyladenosine biosynthesis protein TsaD</fullName>
    </alternativeName>
    <alternativeName>
        <fullName evidence="1">tRNA threonylcarbamoyladenosine biosynthesis protein TsaD</fullName>
    </alternativeName>
</protein>
<accession>Q1G933</accession>
<sequence>MKEKKDIRILAFESSCDETSTAVVKNGSEIESLVVATQIKSHARFGGVVPEVASRHHIEVITQITREALEEAKVSWEDLDAIAVTHGPGLVGALLIGINAAKAASMATGLPLIGVDHIMGHISAAQLVEPVEYPALALQVSGGHTEIALLKDPTHFEIVGDTRDDAAGEAYDKIGRVLGVNYPAGKTIDQWAHQGKDTFGFPRAMIDEDNYDFSFSGLKSAFINTCHHADQIGEKLDKYDLAASFQAAVVDVLAEKTVRAIRQYQPKTFIMGGGVAANLGLRERMNKEIAALEKAPKVILPPLKLCGDNAAMIGAAAYNQYLAGNFADLTLDADPSMELPYAEDYK</sequence>
<gene>
    <name evidence="1" type="primary">tsaD</name>
    <name type="synonym">gcp</name>
    <name type="ordered locus">Ldb1621</name>
</gene>
<name>TSAD_LACDA</name>
<reference key="1">
    <citation type="journal article" date="2006" name="Proc. Natl. Acad. Sci. U.S.A.">
        <title>The complete genome sequence of Lactobacillus bulgaricus reveals extensive and ongoing reductive evolution.</title>
        <authorList>
            <person name="van de Guchte M."/>
            <person name="Penaud S."/>
            <person name="Grimaldi C."/>
            <person name="Barbe V."/>
            <person name="Bryson K."/>
            <person name="Nicolas P."/>
            <person name="Robert C."/>
            <person name="Oztas S."/>
            <person name="Mangenot S."/>
            <person name="Couloux A."/>
            <person name="Loux V."/>
            <person name="Dervyn R."/>
            <person name="Bossy R."/>
            <person name="Bolotin A."/>
            <person name="Batto J.-M."/>
            <person name="Walunas T."/>
            <person name="Gibrat J.-F."/>
            <person name="Bessieres P."/>
            <person name="Weissenbach J."/>
            <person name="Ehrlich S.D."/>
            <person name="Maguin E."/>
        </authorList>
    </citation>
    <scope>NUCLEOTIDE SEQUENCE [LARGE SCALE GENOMIC DNA]</scope>
    <source>
        <strain>ATCC 11842 / DSM 20081 / BCRC 10696 / JCM 1002 / NBRC 13953 / NCIMB 11778 / NCTC 12712 / WDCM 00102 / Lb 14</strain>
    </source>
</reference>
<proteinExistence type="inferred from homology"/>
<evidence type="ECO:0000255" key="1">
    <source>
        <dbReference type="HAMAP-Rule" id="MF_01445"/>
    </source>
</evidence>
<feature type="chain" id="PRO_0000303392" description="tRNA N6-adenosine threonylcarbamoyltransferase">
    <location>
        <begin position="1"/>
        <end position="346"/>
    </location>
</feature>
<feature type="binding site" evidence="1">
    <location>
        <position position="117"/>
    </location>
    <ligand>
        <name>Fe cation</name>
        <dbReference type="ChEBI" id="CHEBI:24875"/>
    </ligand>
</feature>
<feature type="binding site" evidence="1">
    <location>
        <position position="121"/>
    </location>
    <ligand>
        <name>Fe cation</name>
        <dbReference type="ChEBI" id="CHEBI:24875"/>
    </ligand>
</feature>
<feature type="binding site" evidence="1">
    <location>
        <begin position="139"/>
        <end position="143"/>
    </location>
    <ligand>
        <name>substrate</name>
    </ligand>
</feature>
<feature type="binding site" evidence="1">
    <location>
        <position position="172"/>
    </location>
    <ligand>
        <name>substrate</name>
    </ligand>
</feature>
<feature type="binding site" evidence="1">
    <location>
        <position position="185"/>
    </location>
    <ligand>
        <name>substrate</name>
    </ligand>
</feature>
<feature type="binding site" evidence="1">
    <location>
        <position position="189"/>
    </location>
    <ligand>
        <name>substrate</name>
    </ligand>
</feature>
<feature type="binding site" evidence="1">
    <location>
        <position position="278"/>
    </location>
    <ligand>
        <name>substrate</name>
    </ligand>
</feature>
<feature type="binding site" evidence="1">
    <location>
        <position position="308"/>
    </location>
    <ligand>
        <name>Fe cation</name>
        <dbReference type="ChEBI" id="CHEBI:24875"/>
    </ligand>
</feature>
<comment type="function">
    <text evidence="1">Required for the formation of a threonylcarbamoyl group on adenosine at position 37 (t(6)A37) in tRNAs that read codons beginning with adenine. Is involved in the transfer of the threonylcarbamoyl moiety of threonylcarbamoyl-AMP (TC-AMP) to the N6 group of A37, together with TsaE and TsaB. TsaD likely plays a direct catalytic role in this reaction.</text>
</comment>
<comment type="catalytic activity">
    <reaction evidence="1">
        <text>L-threonylcarbamoyladenylate + adenosine(37) in tRNA = N(6)-L-threonylcarbamoyladenosine(37) in tRNA + AMP + H(+)</text>
        <dbReference type="Rhea" id="RHEA:37059"/>
        <dbReference type="Rhea" id="RHEA-COMP:10162"/>
        <dbReference type="Rhea" id="RHEA-COMP:10163"/>
        <dbReference type="ChEBI" id="CHEBI:15378"/>
        <dbReference type="ChEBI" id="CHEBI:73682"/>
        <dbReference type="ChEBI" id="CHEBI:74411"/>
        <dbReference type="ChEBI" id="CHEBI:74418"/>
        <dbReference type="ChEBI" id="CHEBI:456215"/>
        <dbReference type="EC" id="2.3.1.234"/>
    </reaction>
</comment>
<comment type="cofactor">
    <cofactor evidence="1">
        <name>Fe(2+)</name>
        <dbReference type="ChEBI" id="CHEBI:29033"/>
    </cofactor>
    <text evidence="1">Binds 1 Fe(2+) ion per subunit.</text>
</comment>
<comment type="subcellular location">
    <subcellularLocation>
        <location evidence="1">Cytoplasm</location>
    </subcellularLocation>
</comment>
<comment type="similarity">
    <text evidence="1">Belongs to the KAE1 / TsaD family.</text>
</comment>
<organism>
    <name type="scientific">Lactobacillus delbrueckii subsp. bulgaricus (strain ATCC 11842 / DSM 20081 / BCRC 10696 / JCM 1002 / NBRC 13953 / NCIMB 11778 / NCTC 12712 / WDCM 00102 / Lb 14)</name>
    <dbReference type="NCBI Taxonomy" id="390333"/>
    <lineage>
        <taxon>Bacteria</taxon>
        <taxon>Bacillati</taxon>
        <taxon>Bacillota</taxon>
        <taxon>Bacilli</taxon>
        <taxon>Lactobacillales</taxon>
        <taxon>Lactobacillaceae</taxon>
        <taxon>Lactobacillus</taxon>
    </lineage>
</organism>